<accession>Q9FLX9</accession>
<sequence>MTMMDTDEGKTVMCLLTDPEGTHLGSAMYIPQKAGPLQLTQLVNRFLDNEEMLPYSFYVSDEELLVPVGTYLEKNKVSVEKVLTIVYQQQAVFRIRPVNRCSQTIAGHAEAVLCVSFSPDGKQLASGSGDTTVRLWDLYTETPLFTCKGHKNWVLTVAWSPDGKHLVSGSKSGEICCWNPKKGELEGSPLTGHKKWITGISWEPVHLSSPCRRFVTSSKDGDARIWDITLKKSIICLSGHTLAVTCVKWGGDGIIYTGSQDCTIKMWETTQGKLIRELKGHGHWINSLALSTEYVLRTGAFDHTGRQYPPNEEKQKALERYNKTKGDSPERLVSGSDDFTMFLWEPSVSKQPKKRLTGHQQLVNHVYFSPDGKWIASASFDKSVRLWNGITGQFVTVFRGHVGPVYQVSWSADSRLLLSGSKDSTLKIWEIRTKKLKQDLPGHADEVFAVDWSPDGEKVVSGGKDRVLKLWKG</sequence>
<keyword id="KW-0539">Nucleus</keyword>
<keyword id="KW-1185">Reference proteome</keyword>
<keyword id="KW-0677">Repeat</keyword>
<keyword id="KW-0853">WD repeat</keyword>
<comment type="function">
    <text evidence="3">Required for female gametophyte development.</text>
</comment>
<comment type="subunit">
    <text evidence="1">Associates with the pre-60S ribosomal particle.</text>
</comment>
<comment type="subcellular location">
    <subcellularLocation>
        <location evidence="1">Nucleus</location>
        <location evidence="1">Nucleolus</location>
    </subcellularLocation>
</comment>
<comment type="tissue specificity">
    <text evidence="3">Constitutively and ubiquitously expressed.</text>
</comment>
<comment type="domain">
    <text evidence="6">The DWD box is required for interaction with DDB1A.</text>
</comment>
<comment type="disruption phenotype">
    <text evidence="3">Female semisterility due to strongly delayed development of female gametophyte.</text>
</comment>
<comment type="similarity">
    <text evidence="5">Belongs to the NLE1/RSA4 family.</text>
</comment>
<name>NLE1_ARATH</name>
<organism>
    <name type="scientific">Arabidopsis thaliana</name>
    <name type="common">Mouse-ear cress</name>
    <dbReference type="NCBI Taxonomy" id="3702"/>
    <lineage>
        <taxon>Eukaryota</taxon>
        <taxon>Viridiplantae</taxon>
        <taxon>Streptophyta</taxon>
        <taxon>Embryophyta</taxon>
        <taxon>Tracheophyta</taxon>
        <taxon>Spermatophyta</taxon>
        <taxon>Magnoliopsida</taxon>
        <taxon>eudicotyledons</taxon>
        <taxon>Gunneridae</taxon>
        <taxon>Pentapetalae</taxon>
        <taxon>rosids</taxon>
        <taxon>malvids</taxon>
        <taxon>Brassicales</taxon>
        <taxon>Brassicaceae</taxon>
        <taxon>Camelineae</taxon>
        <taxon>Arabidopsis</taxon>
    </lineage>
</organism>
<evidence type="ECO:0000250" key="1">
    <source>
        <dbReference type="UniProtKB" id="P25382"/>
    </source>
</evidence>
<evidence type="ECO:0000255" key="2"/>
<evidence type="ECO:0000269" key="3">
    <source>
    </source>
</evidence>
<evidence type="ECO:0000303" key="4">
    <source>
    </source>
</evidence>
<evidence type="ECO:0000305" key="5"/>
<evidence type="ECO:0000305" key="6">
    <source>
    </source>
</evidence>
<evidence type="ECO:0000312" key="7">
    <source>
        <dbReference type="Araport" id="AT5G52820"/>
    </source>
</evidence>
<evidence type="ECO:0000312" key="8">
    <source>
        <dbReference type="EMBL" id="BAB10430.1"/>
    </source>
</evidence>
<feature type="chain" id="PRO_0000284893" description="Notchless protein homolog">
    <location>
        <begin position="1"/>
        <end position="473"/>
    </location>
</feature>
<feature type="repeat" description="WD 1" evidence="2">
    <location>
        <begin position="107"/>
        <end position="146"/>
    </location>
</feature>
<feature type="repeat" description="WD 2" evidence="2">
    <location>
        <begin position="149"/>
        <end position="188"/>
    </location>
</feature>
<feature type="repeat" description="WD 3" evidence="2">
    <location>
        <begin position="192"/>
        <end position="236"/>
    </location>
</feature>
<feature type="repeat" description="WD 4" evidence="2">
    <location>
        <begin position="239"/>
        <end position="277"/>
    </location>
</feature>
<feature type="repeat" description="WD 5" evidence="2">
    <location>
        <begin position="313"/>
        <end position="354"/>
    </location>
</feature>
<feature type="repeat" description="WD 6" evidence="2">
    <location>
        <begin position="358"/>
        <end position="399"/>
    </location>
</feature>
<feature type="repeat" description="WD 7" evidence="2">
    <location>
        <begin position="400"/>
        <end position="439"/>
    </location>
</feature>
<feature type="repeat" description="WD 8" evidence="2">
    <location>
        <begin position="442"/>
        <end position="473"/>
    </location>
</feature>
<feature type="region of interest" description="Ubiquitin-like (UBL) domain" evidence="1">
    <location>
        <begin position="9"/>
        <end position="91"/>
    </location>
</feature>
<feature type="short sequence motif" description="DWD box" evidence="6">
    <location>
        <begin position="417"/>
        <end position="432"/>
    </location>
</feature>
<dbReference type="EMBL" id="AB009055">
    <property type="protein sequence ID" value="BAB10430.1"/>
    <property type="molecule type" value="Genomic_DNA"/>
</dbReference>
<dbReference type="EMBL" id="CP002688">
    <property type="protein sequence ID" value="AED96265.1"/>
    <property type="molecule type" value="Genomic_DNA"/>
</dbReference>
<dbReference type="EMBL" id="AK227330">
    <property type="protein sequence ID" value="BAE99344.1"/>
    <property type="molecule type" value="mRNA"/>
</dbReference>
<dbReference type="EMBL" id="BT004562">
    <property type="protein sequence ID" value="AAO42808.1"/>
    <property type="molecule type" value="mRNA"/>
</dbReference>
<dbReference type="RefSeq" id="NP_200094.1">
    <property type="nucleotide sequence ID" value="NM_124660.4"/>
</dbReference>
<dbReference type="SMR" id="Q9FLX9"/>
<dbReference type="FunCoup" id="Q9FLX9">
    <property type="interactions" value="3112"/>
</dbReference>
<dbReference type="STRING" id="3702.Q9FLX9"/>
<dbReference type="PaxDb" id="3702-AT5G52820.1"/>
<dbReference type="ProteomicsDB" id="251140"/>
<dbReference type="EnsemblPlants" id="AT5G52820.1">
    <property type="protein sequence ID" value="AT5G52820.1"/>
    <property type="gene ID" value="AT5G52820"/>
</dbReference>
<dbReference type="GeneID" id="835359"/>
<dbReference type="Gramene" id="AT5G52820.1">
    <property type="protein sequence ID" value="AT5G52820.1"/>
    <property type="gene ID" value="AT5G52820"/>
</dbReference>
<dbReference type="KEGG" id="ath:AT5G52820"/>
<dbReference type="Araport" id="AT5G52820"/>
<dbReference type="TAIR" id="AT5G52820">
    <property type="gene designation" value="NLE"/>
</dbReference>
<dbReference type="eggNOG" id="KOG0271">
    <property type="taxonomic scope" value="Eukaryota"/>
</dbReference>
<dbReference type="HOGENOM" id="CLU_000288_57_16_1"/>
<dbReference type="InParanoid" id="Q9FLX9"/>
<dbReference type="OMA" id="AWEPYHR"/>
<dbReference type="OrthoDB" id="10267436at2759"/>
<dbReference type="PhylomeDB" id="Q9FLX9"/>
<dbReference type="CD-CODE" id="4299E36E">
    <property type="entry name" value="Nucleolus"/>
</dbReference>
<dbReference type="PRO" id="PR:Q9FLX9"/>
<dbReference type="Proteomes" id="UP000006548">
    <property type="component" value="Chromosome 5"/>
</dbReference>
<dbReference type="ExpressionAtlas" id="Q9FLX9">
    <property type="expression patterns" value="baseline and differential"/>
</dbReference>
<dbReference type="GO" id="GO:0080008">
    <property type="term" value="C:Cul4-RING E3 ubiquitin ligase complex"/>
    <property type="evidence" value="ECO:0000250"/>
    <property type="project" value="TAIR"/>
</dbReference>
<dbReference type="GO" id="GO:0005730">
    <property type="term" value="C:nucleolus"/>
    <property type="evidence" value="ECO:0007669"/>
    <property type="project" value="UniProtKB-SubCell"/>
</dbReference>
<dbReference type="GO" id="GO:0009553">
    <property type="term" value="P:embryo sac development"/>
    <property type="evidence" value="ECO:0000315"/>
    <property type="project" value="TAIR"/>
</dbReference>
<dbReference type="CDD" id="cd00200">
    <property type="entry name" value="WD40"/>
    <property type="match status" value="1"/>
</dbReference>
<dbReference type="FunFam" id="2.130.10.10:FF:000092">
    <property type="entry name" value="notchless protein homolog"/>
    <property type="match status" value="1"/>
</dbReference>
<dbReference type="Gene3D" id="2.130.10.10">
    <property type="entry name" value="YVTN repeat-like/Quinoprotein amine dehydrogenase"/>
    <property type="match status" value="1"/>
</dbReference>
<dbReference type="InterPro" id="IPR020472">
    <property type="entry name" value="G-protein_beta_WD-40_rep"/>
</dbReference>
<dbReference type="InterPro" id="IPR001632">
    <property type="entry name" value="Gprotein_B"/>
</dbReference>
<dbReference type="InterPro" id="IPR012972">
    <property type="entry name" value="NLE"/>
</dbReference>
<dbReference type="InterPro" id="IPR015943">
    <property type="entry name" value="WD40/YVTN_repeat-like_dom_sf"/>
</dbReference>
<dbReference type="InterPro" id="IPR019775">
    <property type="entry name" value="WD40_repeat_CS"/>
</dbReference>
<dbReference type="InterPro" id="IPR036322">
    <property type="entry name" value="WD40_repeat_dom_sf"/>
</dbReference>
<dbReference type="InterPro" id="IPR001680">
    <property type="entry name" value="WD40_rpt"/>
</dbReference>
<dbReference type="PANTHER" id="PTHR19848:SF0">
    <property type="entry name" value="NOTCHLESS PROTEIN HOMOLOG 1"/>
    <property type="match status" value="1"/>
</dbReference>
<dbReference type="PANTHER" id="PTHR19848">
    <property type="entry name" value="WD40 REPEAT PROTEIN"/>
    <property type="match status" value="1"/>
</dbReference>
<dbReference type="Pfam" id="PF08154">
    <property type="entry name" value="NLE"/>
    <property type="match status" value="1"/>
</dbReference>
<dbReference type="Pfam" id="PF00400">
    <property type="entry name" value="WD40"/>
    <property type="match status" value="7"/>
</dbReference>
<dbReference type="PRINTS" id="PR00319">
    <property type="entry name" value="GPROTEINB"/>
</dbReference>
<dbReference type="PRINTS" id="PR00320">
    <property type="entry name" value="GPROTEINBRPT"/>
</dbReference>
<dbReference type="SMART" id="SM00320">
    <property type="entry name" value="WD40"/>
    <property type="match status" value="8"/>
</dbReference>
<dbReference type="SUPFAM" id="SSF50978">
    <property type="entry name" value="WD40 repeat-like"/>
    <property type="match status" value="1"/>
</dbReference>
<dbReference type="PROSITE" id="PS00678">
    <property type="entry name" value="WD_REPEATS_1"/>
    <property type="match status" value="4"/>
</dbReference>
<dbReference type="PROSITE" id="PS50082">
    <property type="entry name" value="WD_REPEATS_2"/>
    <property type="match status" value="7"/>
</dbReference>
<dbReference type="PROSITE" id="PS50294">
    <property type="entry name" value="WD_REPEATS_REGION"/>
    <property type="match status" value="1"/>
</dbReference>
<proteinExistence type="evidence at transcript level"/>
<reference key="1">
    <citation type="journal article" date="1998" name="DNA Res.">
        <title>Structural analysis of Arabidopsis thaliana chromosome 5. IV. Sequence features of the regions of 1,456,315 bp covered by nineteen physically assigned P1 and TAC clones.</title>
        <authorList>
            <person name="Sato S."/>
            <person name="Kaneko T."/>
            <person name="Kotani H."/>
            <person name="Nakamura Y."/>
            <person name="Asamizu E."/>
            <person name="Miyajima N."/>
            <person name="Tabata S."/>
        </authorList>
    </citation>
    <scope>NUCLEOTIDE SEQUENCE [LARGE SCALE GENOMIC DNA]</scope>
    <source>
        <strain>cv. Columbia</strain>
    </source>
</reference>
<reference key="2">
    <citation type="journal article" date="2017" name="Plant J.">
        <title>Araport11: a complete reannotation of the Arabidopsis thaliana reference genome.</title>
        <authorList>
            <person name="Cheng C.Y."/>
            <person name="Krishnakumar V."/>
            <person name="Chan A.P."/>
            <person name="Thibaud-Nissen F."/>
            <person name="Schobel S."/>
            <person name="Town C.D."/>
        </authorList>
    </citation>
    <scope>GENOME REANNOTATION</scope>
    <source>
        <strain>cv. Columbia</strain>
    </source>
</reference>
<reference key="3">
    <citation type="journal article" date="2003" name="Science">
        <title>Empirical analysis of transcriptional activity in the Arabidopsis genome.</title>
        <authorList>
            <person name="Yamada K."/>
            <person name="Lim J."/>
            <person name="Dale J.M."/>
            <person name="Chen H."/>
            <person name="Shinn P."/>
            <person name="Palm C.J."/>
            <person name="Southwick A.M."/>
            <person name="Wu H.C."/>
            <person name="Kim C.J."/>
            <person name="Nguyen M."/>
            <person name="Pham P.K."/>
            <person name="Cheuk R.F."/>
            <person name="Karlin-Newmann G."/>
            <person name="Liu S.X."/>
            <person name="Lam B."/>
            <person name="Sakano H."/>
            <person name="Wu T."/>
            <person name="Yu G."/>
            <person name="Miranda M."/>
            <person name="Quach H.L."/>
            <person name="Tripp M."/>
            <person name="Chang C.H."/>
            <person name="Lee J.M."/>
            <person name="Toriumi M.J."/>
            <person name="Chan M.M."/>
            <person name="Tang C.C."/>
            <person name="Onodera C.S."/>
            <person name="Deng J.M."/>
            <person name="Akiyama K."/>
            <person name="Ansari Y."/>
            <person name="Arakawa T."/>
            <person name="Banh J."/>
            <person name="Banno F."/>
            <person name="Bowser L."/>
            <person name="Brooks S.Y."/>
            <person name="Carninci P."/>
            <person name="Chao Q."/>
            <person name="Choy N."/>
            <person name="Enju A."/>
            <person name="Goldsmith A.D."/>
            <person name="Gurjal M."/>
            <person name="Hansen N.F."/>
            <person name="Hayashizaki Y."/>
            <person name="Johnson-Hopson C."/>
            <person name="Hsuan V.W."/>
            <person name="Iida K."/>
            <person name="Karnes M."/>
            <person name="Khan S."/>
            <person name="Koesema E."/>
            <person name="Ishida J."/>
            <person name="Jiang P.X."/>
            <person name="Jones T."/>
            <person name="Kawai J."/>
            <person name="Kamiya A."/>
            <person name="Meyers C."/>
            <person name="Nakajima M."/>
            <person name="Narusaka M."/>
            <person name="Seki M."/>
            <person name="Sakurai T."/>
            <person name="Satou M."/>
            <person name="Tamse R."/>
            <person name="Vaysberg M."/>
            <person name="Wallender E.K."/>
            <person name="Wong C."/>
            <person name="Yamamura Y."/>
            <person name="Yuan S."/>
            <person name="Shinozaki K."/>
            <person name="Davis R.W."/>
            <person name="Theologis A."/>
            <person name="Ecker J.R."/>
        </authorList>
    </citation>
    <scope>NUCLEOTIDE SEQUENCE [LARGE SCALE MRNA]</scope>
    <source>
        <strain>cv. Columbia</strain>
    </source>
</reference>
<reference key="4">
    <citation type="submission" date="2006-07" db="EMBL/GenBank/DDBJ databases">
        <title>Large-scale analysis of RIKEN Arabidopsis full-length (RAFL) cDNAs.</title>
        <authorList>
            <person name="Totoki Y."/>
            <person name="Seki M."/>
            <person name="Ishida J."/>
            <person name="Nakajima M."/>
            <person name="Enju A."/>
            <person name="Kamiya A."/>
            <person name="Narusaka M."/>
            <person name="Shin-i T."/>
            <person name="Nakagawa M."/>
            <person name="Sakamoto N."/>
            <person name="Oishi K."/>
            <person name="Kohara Y."/>
            <person name="Kobayashi M."/>
            <person name="Toyoda A."/>
            <person name="Sakaki Y."/>
            <person name="Sakurai T."/>
            <person name="Iida K."/>
            <person name="Akiyama K."/>
            <person name="Satou M."/>
            <person name="Toyoda T."/>
            <person name="Konagaya A."/>
            <person name="Carninci P."/>
            <person name="Kawai J."/>
            <person name="Hayashizaki Y."/>
            <person name="Shinozaki K."/>
        </authorList>
    </citation>
    <scope>NUCLEOTIDE SEQUENCE [LARGE SCALE MRNA]</scope>
    <source>
        <strain>cv. Columbia</strain>
    </source>
</reference>
<reference key="5">
    <citation type="journal article" date="2008" name="Plant Cell">
        <title>Characterization of Arabidopsis and rice DWD proteins and their roles as substrate receptors for CUL4-RING E3 ubiquitin ligases.</title>
        <authorList>
            <person name="Lee J.H."/>
            <person name="Terzaghi W."/>
            <person name="Gusmaroli G."/>
            <person name="Charron J.B."/>
            <person name="Yoon H.J."/>
            <person name="Chen H."/>
            <person name="He Y.J."/>
            <person name="Xiong Y."/>
            <person name="Deng X.W."/>
        </authorList>
    </citation>
    <scope>DWD MOTIF</scope>
</reference>
<reference key="6">
    <citation type="journal article" date="2010" name="Physiol. Mol. Biol. Plants">
        <title>The MIDASIN and NOTCHLESS genes are essential for female gametophyte development in Arabidopsis thaliana.</title>
        <authorList>
            <person name="Chantha S.-C."/>
            <person name="Gray-Mitsumune M."/>
            <person name="Houde J."/>
            <person name="Matton D.P."/>
        </authorList>
    </citation>
    <scope>FUNCTION</scope>
    <scope>DISRUPTION PHENOTYPE</scope>
    <scope>TISSUE SPECIFICITY</scope>
    <source>
        <strain>cv. Wassilewskija</strain>
    </source>
</reference>
<gene>
    <name evidence="4" type="primary">NLE1</name>
    <name evidence="7" type="ordered locus">At5g52820</name>
    <name evidence="8" type="ORF">MXC20.4</name>
</gene>
<protein>
    <recommendedName>
        <fullName evidence="4">Notchless protein homolog</fullName>
    </recommendedName>
</protein>